<accession>A1K598</accession>
<reference key="1">
    <citation type="journal article" date="2006" name="Nat. Biotechnol.">
        <title>Complete genome of the mutualistic, N2-fixing grass endophyte Azoarcus sp. strain BH72.</title>
        <authorList>
            <person name="Krause A."/>
            <person name="Ramakumar A."/>
            <person name="Bartels D."/>
            <person name="Battistoni F."/>
            <person name="Bekel T."/>
            <person name="Boch J."/>
            <person name="Boehm M."/>
            <person name="Friedrich F."/>
            <person name="Hurek T."/>
            <person name="Krause L."/>
            <person name="Linke B."/>
            <person name="McHardy A.C."/>
            <person name="Sarkar A."/>
            <person name="Schneiker S."/>
            <person name="Syed A.A."/>
            <person name="Thauer R."/>
            <person name="Vorhoelter F.-J."/>
            <person name="Weidner S."/>
            <person name="Puehler A."/>
            <person name="Reinhold-Hurek B."/>
            <person name="Kaiser O."/>
            <person name="Goesmann A."/>
        </authorList>
    </citation>
    <scope>NUCLEOTIDE SEQUENCE [LARGE SCALE GENOMIC DNA]</scope>
    <source>
        <strain>BH72</strain>
    </source>
</reference>
<protein>
    <recommendedName>
        <fullName evidence="1">Ribosomal RNA large subunit methyltransferase E</fullName>
        <ecNumber evidence="1">2.1.1.166</ecNumber>
    </recommendedName>
    <alternativeName>
        <fullName evidence="1">23S rRNA Um2552 methyltransferase</fullName>
    </alternativeName>
    <alternativeName>
        <fullName evidence="1">rRNA (uridine-2'-O-)-methyltransferase</fullName>
    </alternativeName>
</protein>
<evidence type="ECO:0000255" key="1">
    <source>
        <dbReference type="HAMAP-Rule" id="MF_01547"/>
    </source>
</evidence>
<gene>
    <name evidence="1" type="primary">rlmE</name>
    <name evidence="1" type="synonym">ftsJ</name>
    <name evidence="1" type="synonym">rrmJ</name>
    <name type="ordered locus">azo1386</name>
</gene>
<organism>
    <name type="scientific">Azoarcus sp. (strain BH72)</name>
    <dbReference type="NCBI Taxonomy" id="418699"/>
    <lineage>
        <taxon>Bacteria</taxon>
        <taxon>Pseudomonadati</taxon>
        <taxon>Pseudomonadota</taxon>
        <taxon>Betaproteobacteria</taxon>
        <taxon>Rhodocyclales</taxon>
        <taxon>Zoogloeaceae</taxon>
        <taxon>Azoarcus</taxon>
    </lineage>
</organism>
<keyword id="KW-0963">Cytoplasm</keyword>
<keyword id="KW-0489">Methyltransferase</keyword>
<keyword id="KW-1185">Reference proteome</keyword>
<keyword id="KW-0698">rRNA processing</keyword>
<keyword id="KW-0949">S-adenosyl-L-methionine</keyword>
<keyword id="KW-0808">Transferase</keyword>
<name>RLME_AZOSB</name>
<feature type="chain" id="PRO_0000282725" description="Ribosomal RNA large subunit methyltransferase E">
    <location>
        <begin position="1"/>
        <end position="205"/>
    </location>
</feature>
<feature type="active site" description="Proton acceptor" evidence="1">
    <location>
        <position position="161"/>
    </location>
</feature>
<feature type="binding site" evidence="1">
    <location>
        <position position="60"/>
    </location>
    <ligand>
        <name>S-adenosyl-L-methionine</name>
        <dbReference type="ChEBI" id="CHEBI:59789"/>
    </ligand>
</feature>
<feature type="binding site" evidence="1">
    <location>
        <position position="62"/>
    </location>
    <ligand>
        <name>S-adenosyl-L-methionine</name>
        <dbReference type="ChEBI" id="CHEBI:59789"/>
    </ligand>
</feature>
<feature type="binding site" evidence="1">
    <location>
        <position position="80"/>
    </location>
    <ligand>
        <name>S-adenosyl-L-methionine</name>
        <dbReference type="ChEBI" id="CHEBI:59789"/>
    </ligand>
</feature>
<feature type="binding site" evidence="1">
    <location>
        <position position="96"/>
    </location>
    <ligand>
        <name>S-adenosyl-L-methionine</name>
        <dbReference type="ChEBI" id="CHEBI:59789"/>
    </ligand>
</feature>
<feature type="binding site" evidence="1">
    <location>
        <position position="121"/>
    </location>
    <ligand>
        <name>S-adenosyl-L-methionine</name>
        <dbReference type="ChEBI" id="CHEBI:59789"/>
    </ligand>
</feature>
<sequence>MKRNKTSKAWMHEHLNDTYVQRANAEGYRARAAYKLMEIDERDRLLRPGRVVVDLGAAPGSWCQVARQRVGSDGRVLALDILPMDPVPGVDFLQGDFTEDAVLAELESRLAGAAVDLVLSDMAPNLSGVATVDQARSIYLCELALDFARRHLKPGGQFLVKVFQGEGFMGFRKAMDEVFLSVQVRKPKASRDRSAEVYLLGVDLR</sequence>
<dbReference type="EC" id="2.1.1.166" evidence="1"/>
<dbReference type="EMBL" id="AM406670">
    <property type="protein sequence ID" value="CAL94003.1"/>
    <property type="molecule type" value="Genomic_DNA"/>
</dbReference>
<dbReference type="RefSeq" id="WP_011765119.1">
    <property type="nucleotide sequence ID" value="NC_008702.1"/>
</dbReference>
<dbReference type="SMR" id="A1K598"/>
<dbReference type="STRING" id="62928.azo1386"/>
<dbReference type="KEGG" id="azo:azo1386"/>
<dbReference type="eggNOG" id="COG0293">
    <property type="taxonomic scope" value="Bacteria"/>
</dbReference>
<dbReference type="HOGENOM" id="CLU_009422_4_0_4"/>
<dbReference type="Proteomes" id="UP000002588">
    <property type="component" value="Chromosome"/>
</dbReference>
<dbReference type="GO" id="GO:0005737">
    <property type="term" value="C:cytoplasm"/>
    <property type="evidence" value="ECO:0007669"/>
    <property type="project" value="UniProtKB-SubCell"/>
</dbReference>
<dbReference type="GO" id="GO:0008650">
    <property type="term" value="F:rRNA (uridine-2'-O-)-methyltransferase activity"/>
    <property type="evidence" value="ECO:0007669"/>
    <property type="project" value="UniProtKB-UniRule"/>
</dbReference>
<dbReference type="FunFam" id="3.40.50.150:FF:000005">
    <property type="entry name" value="Ribosomal RNA large subunit methyltransferase E"/>
    <property type="match status" value="1"/>
</dbReference>
<dbReference type="Gene3D" id="3.40.50.150">
    <property type="entry name" value="Vaccinia Virus protein VP39"/>
    <property type="match status" value="1"/>
</dbReference>
<dbReference type="HAMAP" id="MF_01547">
    <property type="entry name" value="RNA_methyltr_E"/>
    <property type="match status" value="1"/>
</dbReference>
<dbReference type="InterPro" id="IPR050082">
    <property type="entry name" value="RNA_methyltr_RlmE"/>
</dbReference>
<dbReference type="InterPro" id="IPR002877">
    <property type="entry name" value="RNA_MeTrfase_FtsJ_dom"/>
</dbReference>
<dbReference type="InterPro" id="IPR015507">
    <property type="entry name" value="rRNA-MeTfrase_E"/>
</dbReference>
<dbReference type="InterPro" id="IPR029063">
    <property type="entry name" value="SAM-dependent_MTases_sf"/>
</dbReference>
<dbReference type="NCBIfam" id="NF008390">
    <property type="entry name" value="PRK11188.1"/>
    <property type="match status" value="1"/>
</dbReference>
<dbReference type="PANTHER" id="PTHR10920">
    <property type="entry name" value="RIBOSOMAL RNA METHYLTRANSFERASE"/>
    <property type="match status" value="1"/>
</dbReference>
<dbReference type="PANTHER" id="PTHR10920:SF18">
    <property type="entry name" value="RRNA METHYLTRANSFERASE 2, MITOCHONDRIAL"/>
    <property type="match status" value="1"/>
</dbReference>
<dbReference type="Pfam" id="PF01728">
    <property type="entry name" value="FtsJ"/>
    <property type="match status" value="1"/>
</dbReference>
<dbReference type="PIRSF" id="PIRSF005461">
    <property type="entry name" value="23S_rRNA_mtase"/>
    <property type="match status" value="1"/>
</dbReference>
<dbReference type="SUPFAM" id="SSF53335">
    <property type="entry name" value="S-adenosyl-L-methionine-dependent methyltransferases"/>
    <property type="match status" value="1"/>
</dbReference>
<proteinExistence type="inferred from homology"/>
<comment type="function">
    <text evidence="1">Specifically methylates the uridine in position 2552 of 23S rRNA at the 2'-O position of the ribose in the fully assembled 50S ribosomal subunit.</text>
</comment>
<comment type="catalytic activity">
    <reaction evidence="1">
        <text>uridine(2552) in 23S rRNA + S-adenosyl-L-methionine = 2'-O-methyluridine(2552) in 23S rRNA + S-adenosyl-L-homocysteine + H(+)</text>
        <dbReference type="Rhea" id="RHEA:42720"/>
        <dbReference type="Rhea" id="RHEA-COMP:10202"/>
        <dbReference type="Rhea" id="RHEA-COMP:10203"/>
        <dbReference type="ChEBI" id="CHEBI:15378"/>
        <dbReference type="ChEBI" id="CHEBI:57856"/>
        <dbReference type="ChEBI" id="CHEBI:59789"/>
        <dbReference type="ChEBI" id="CHEBI:65315"/>
        <dbReference type="ChEBI" id="CHEBI:74478"/>
        <dbReference type="EC" id="2.1.1.166"/>
    </reaction>
</comment>
<comment type="subcellular location">
    <subcellularLocation>
        <location evidence="1">Cytoplasm</location>
    </subcellularLocation>
</comment>
<comment type="similarity">
    <text evidence="1">Belongs to the class I-like SAM-binding methyltransferase superfamily. RNA methyltransferase RlmE family.</text>
</comment>